<accession>Q5UZJ9</accession>
<keyword id="KW-0255">Endonuclease</keyword>
<keyword id="KW-0378">Hydrolase</keyword>
<keyword id="KW-0479">Metal-binding</keyword>
<keyword id="KW-0540">Nuclease</keyword>
<keyword id="KW-1185">Reference proteome</keyword>
<keyword id="KW-0819">tRNA processing</keyword>
<keyword id="KW-0862">Zinc</keyword>
<feature type="chain" id="PRO_0000155921" description="Ribonuclease Z">
    <location>
        <begin position="1"/>
        <end position="311"/>
    </location>
</feature>
<feature type="active site" description="Proton acceptor" evidence="1">
    <location>
        <position position="65"/>
    </location>
</feature>
<feature type="binding site" evidence="1">
    <location>
        <position position="61"/>
    </location>
    <ligand>
        <name>Zn(2+)</name>
        <dbReference type="ChEBI" id="CHEBI:29105"/>
        <label>1</label>
        <note>catalytic</note>
    </ligand>
</feature>
<feature type="binding site" evidence="1">
    <location>
        <position position="63"/>
    </location>
    <ligand>
        <name>Zn(2+)</name>
        <dbReference type="ChEBI" id="CHEBI:29105"/>
        <label>1</label>
        <note>catalytic</note>
    </ligand>
</feature>
<feature type="binding site" evidence="1">
    <location>
        <position position="65"/>
    </location>
    <ligand>
        <name>Zn(2+)</name>
        <dbReference type="ChEBI" id="CHEBI:29105"/>
        <label>2</label>
        <note>catalytic</note>
    </ligand>
</feature>
<feature type="binding site" evidence="1">
    <location>
        <position position="66"/>
    </location>
    <ligand>
        <name>Zn(2+)</name>
        <dbReference type="ChEBI" id="CHEBI:29105"/>
        <label>2</label>
        <note>catalytic</note>
    </ligand>
</feature>
<feature type="binding site" evidence="1">
    <location>
        <position position="139"/>
    </location>
    <ligand>
        <name>Zn(2+)</name>
        <dbReference type="ChEBI" id="CHEBI:29105"/>
        <label>1</label>
        <note>catalytic</note>
    </ligand>
</feature>
<feature type="binding site" evidence="1">
    <location>
        <position position="210"/>
    </location>
    <ligand>
        <name>Zn(2+)</name>
        <dbReference type="ChEBI" id="CHEBI:29105"/>
        <label>1</label>
        <note>catalytic</note>
    </ligand>
</feature>
<feature type="binding site" evidence="1">
    <location>
        <position position="210"/>
    </location>
    <ligand>
        <name>Zn(2+)</name>
        <dbReference type="ChEBI" id="CHEBI:29105"/>
        <label>2</label>
        <note>catalytic</note>
    </ligand>
</feature>
<feature type="binding site" evidence="1">
    <location>
        <position position="268"/>
    </location>
    <ligand>
        <name>Zn(2+)</name>
        <dbReference type="ChEBI" id="CHEBI:29105"/>
        <label>2</label>
        <note>catalytic</note>
    </ligand>
</feature>
<evidence type="ECO:0000255" key="1">
    <source>
        <dbReference type="HAMAP-Rule" id="MF_01818"/>
    </source>
</evidence>
<reference key="1">
    <citation type="journal article" date="2004" name="Genome Res.">
        <title>Genome sequence of Haloarcula marismortui: a halophilic archaeon from the Dead Sea.</title>
        <authorList>
            <person name="Baliga N.S."/>
            <person name="Bonneau R."/>
            <person name="Facciotti M.T."/>
            <person name="Pan M."/>
            <person name="Glusman G."/>
            <person name="Deutsch E.W."/>
            <person name="Shannon P."/>
            <person name="Chiu Y."/>
            <person name="Weng R.S."/>
            <person name="Gan R.R."/>
            <person name="Hung P."/>
            <person name="Date S.V."/>
            <person name="Marcotte E."/>
            <person name="Hood L."/>
            <person name="Ng W.V."/>
        </authorList>
    </citation>
    <scope>NUCLEOTIDE SEQUENCE [LARGE SCALE GENOMIC DNA]</scope>
    <source>
        <strain>ATCC 43049 / DSM 3752 / JCM 8966 / VKM B-1809</strain>
    </source>
</reference>
<proteinExistence type="inferred from homology"/>
<name>RNZ_HALMA</name>
<comment type="function">
    <text evidence="1">Zinc phosphodiesterase, which displays some tRNA 3'-processing endonuclease activity. Probably involved in tRNA maturation, by removing a 3'-trailer from precursor tRNA.</text>
</comment>
<comment type="catalytic activity">
    <reaction evidence="1">
        <text>Endonucleolytic cleavage of RNA, removing extra 3' nucleotides from tRNA precursor, generating 3' termini of tRNAs. A 3'-hydroxy group is left at the tRNA terminus and a 5'-phosphoryl group is left at the trailer molecule.</text>
        <dbReference type="EC" id="3.1.26.11"/>
    </reaction>
</comment>
<comment type="cofactor">
    <cofactor evidence="1">
        <name>Zn(2+)</name>
        <dbReference type="ChEBI" id="CHEBI:29105"/>
    </cofactor>
    <text evidence="1">Binds 2 Zn(2+) ions.</text>
</comment>
<comment type="subunit">
    <text evidence="1">Homodimer.</text>
</comment>
<comment type="similarity">
    <text evidence="1">Belongs to the RNase Z family.</text>
</comment>
<gene>
    <name evidence="1" type="primary">rnz</name>
    <name type="ordered locus">rrnAC2500</name>
</gene>
<protein>
    <recommendedName>
        <fullName evidence="1">Ribonuclease Z</fullName>
        <shortName evidence="1">RNase Z</shortName>
        <ecNumber evidence="1">3.1.26.11</ecNumber>
    </recommendedName>
    <alternativeName>
        <fullName evidence="1">tRNA 3 endonuclease</fullName>
    </alternativeName>
    <alternativeName>
        <fullName evidence="1">tRNase Z</fullName>
    </alternativeName>
</protein>
<organism>
    <name type="scientific">Haloarcula marismortui (strain ATCC 43049 / DSM 3752 / JCM 8966 / VKM B-1809)</name>
    <name type="common">Halobacterium marismortui</name>
    <dbReference type="NCBI Taxonomy" id="272569"/>
    <lineage>
        <taxon>Archaea</taxon>
        <taxon>Methanobacteriati</taxon>
        <taxon>Methanobacteriota</taxon>
        <taxon>Stenosarchaea group</taxon>
        <taxon>Halobacteria</taxon>
        <taxon>Halobacteriales</taxon>
        <taxon>Haloarculaceae</taxon>
        <taxon>Haloarcula</taxon>
    </lineage>
</organism>
<dbReference type="EC" id="3.1.26.11" evidence="1"/>
<dbReference type="EMBL" id="AY596297">
    <property type="protein sequence ID" value="AAV47304.1"/>
    <property type="molecule type" value="Genomic_DNA"/>
</dbReference>
<dbReference type="RefSeq" id="WP_004959414.1">
    <property type="nucleotide sequence ID" value="NZ_CP039138.1"/>
</dbReference>
<dbReference type="SMR" id="Q5UZJ9"/>
<dbReference type="STRING" id="272569.rrnAC2500"/>
<dbReference type="PaxDb" id="272569-rrnAC2500"/>
<dbReference type="EnsemblBacteria" id="AAV47304">
    <property type="protein sequence ID" value="AAV47304"/>
    <property type="gene ID" value="rrnAC2500"/>
</dbReference>
<dbReference type="GeneID" id="64824212"/>
<dbReference type="KEGG" id="hma:rrnAC2500"/>
<dbReference type="PATRIC" id="fig|272569.17.peg.3109"/>
<dbReference type="eggNOG" id="arCOG00501">
    <property type="taxonomic scope" value="Archaea"/>
</dbReference>
<dbReference type="HOGENOM" id="CLU_031317_2_1_2"/>
<dbReference type="Proteomes" id="UP000001169">
    <property type="component" value="Chromosome I"/>
</dbReference>
<dbReference type="GO" id="GO:0042781">
    <property type="term" value="F:3'-tRNA processing endoribonuclease activity"/>
    <property type="evidence" value="ECO:0007669"/>
    <property type="project" value="UniProtKB-UniRule"/>
</dbReference>
<dbReference type="GO" id="GO:0008270">
    <property type="term" value="F:zinc ion binding"/>
    <property type="evidence" value="ECO:0007669"/>
    <property type="project" value="UniProtKB-UniRule"/>
</dbReference>
<dbReference type="CDD" id="cd07717">
    <property type="entry name" value="RNaseZ_ZiPD-like_MBL-fold"/>
    <property type="match status" value="1"/>
</dbReference>
<dbReference type="FunFam" id="3.60.15.10:FF:000002">
    <property type="entry name" value="Ribonuclease Z"/>
    <property type="match status" value="1"/>
</dbReference>
<dbReference type="Gene3D" id="3.60.15.10">
    <property type="entry name" value="Ribonuclease Z/Hydroxyacylglutathione hydrolase-like"/>
    <property type="match status" value="1"/>
</dbReference>
<dbReference type="HAMAP" id="MF_01818">
    <property type="entry name" value="RNase_Z_BN"/>
    <property type="match status" value="1"/>
</dbReference>
<dbReference type="InterPro" id="IPR001279">
    <property type="entry name" value="Metallo-B-lactamas"/>
</dbReference>
<dbReference type="InterPro" id="IPR036866">
    <property type="entry name" value="RibonucZ/Hydroxyglut_hydro"/>
</dbReference>
<dbReference type="InterPro" id="IPR013471">
    <property type="entry name" value="RNase_Z/BN"/>
</dbReference>
<dbReference type="NCBIfam" id="NF000801">
    <property type="entry name" value="PRK00055.1-3"/>
    <property type="match status" value="1"/>
</dbReference>
<dbReference type="NCBIfam" id="TIGR02651">
    <property type="entry name" value="RNase_Z"/>
    <property type="match status" value="1"/>
</dbReference>
<dbReference type="PANTHER" id="PTHR46018">
    <property type="entry name" value="ZINC PHOSPHODIESTERASE ELAC PROTEIN 1"/>
    <property type="match status" value="1"/>
</dbReference>
<dbReference type="PANTHER" id="PTHR46018:SF2">
    <property type="entry name" value="ZINC PHOSPHODIESTERASE ELAC PROTEIN 1"/>
    <property type="match status" value="1"/>
</dbReference>
<dbReference type="Pfam" id="PF00753">
    <property type="entry name" value="Lactamase_B"/>
    <property type="match status" value="1"/>
</dbReference>
<dbReference type="SMART" id="SM00849">
    <property type="entry name" value="Lactamase_B"/>
    <property type="match status" value="1"/>
</dbReference>
<dbReference type="SUPFAM" id="SSF56281">
    <property type="entry name" value="Metallo-hydrolase/oxidoreductase"/>
    <property type="match status" value="1"/>
</dbReference>
<sequence length="311" mass="34236">MTMRVTFLGTSGAVPTTQRNTSSIFVNRDGDYLLFDCGEGTQRQMMRYGTGFAIDHLFVTHLHGDHVLGIPGLLQTWDFNERERAIAIHTPAGTRGNIKQLIQANGTTPSFPVRINEVSAGDVVLDRSEYEIRAIETAHRCASVGYVLDEDDRKGKFDREKAEEEFGIPPGPKYSKLHRGEAVEHEGETIQPEAVVGPARPGRRFVYTGDTLPTESVIEASEDADLLVHDATFAEDRKERAKATAHSTAREAADVARQAGASTLALTHISTRYAASADELVDEARDAFDGEVVLAEDGMERRVEFPDADEY</sequence>